<dbReference type="PIR" id="S69145">
    <property type="entry name" value="S69145"/>
</dbReference>
<dbReference type="SMR" id="P21923"/>
<dbReference type="eggNOG" id="ENOG502R3RE">
    <property type="taxonomic scope" value="Eukaryota"/>
</dbReference>
<dbReference type="ExpressionAtlas" id="P21923">
    <property type="expression patterns" value="baseline"/>
</dbReference>
<dbReference type="GO" id="GO:0050832">
    <property type="term" value="P:defense response to fungus"/>
    <property type="evidence" value="ECO:0007669"/>
    <property type="project" value="UniProtKB-KW"/>
</dbReference>
<dbReference type="GO" id="GO:0031640">
    <property type="term" value="P:killing of cells of another organism"/>
    <property type="evidence" value="ECO:0007669"/>
    <property type="project" value="UniProtKB-KW"/>
</dbReference>
<dbReference type="Gene3D" id="3.30.30.10">
    <property type="entry name" value="Knottin, scorpion toxin-like"/>
    <property type="match status" value="1"/>
</dbReference>
<dbReference type="InterPro" id="IPR008176">
    <property type="entry name" value="Defensin_plant"/>
</dbReference>
<dbReference type="InterPro" id="IPR003614">
    <property type="entry name" value="Scorpion_toxin-like"/>
</dbReference>
<dbReference type="InterPro" id="IPR036574">
    <property type="entry name" value="Scorpion_toxin-like_sf"/>
</dbReference>
<dbReference type="Pfam" id="PF00304">
    <property type="entry name" value="Gamma-thionin"/>
    <property type="match status" value="1"/>
</dbReference>
<dbReference type="SMART" id="SM00505">
    <property type="entry name" value="Knot1"/>
    <property type="match status" value="1"/>
</dbReference>
<dbReference type="SUPFAM" id="SSF57095">
    <property type="entry name" value="Scorpion toxin-like"/>
    <property type="match status" value="1"/>
</dbReference>
<dbReference type="PROSITE" id="PS00940">
    <property type="entry name" value="GAMMA_THIONIN"/>
    <property type="match status" value="1"/>
</dbReference>
<evidence type="ECO:0000305" key="1"/>
<feature type="chain" id="PRO_0000074248" description="Defensin-like protein 1">
    <location>
        <begin position="1"/>
        <end position="47"/>
    </location>
</feature>
<feature type="disulfide bond">
    <location>
        <begin position="3"/>
        <end position="47"/>
    </location>
</feature>
<feature type="disulfide bond">
    <location>
        <begin position="14"/>
        <end position="36"/>
    </location>
</feature>
<feature type="disulfide bond">
    <location>
        <begin position="20"/>
        <end position="41"/>
    </location>
</feature>
<feature type="disulfide bond">
    <location>
        <begin position="24"/>
        <end position="43"/>
    </location>
</feature>
<name>DEF1_SORBI</name>
<reference key="1">
    <citation type="journal article" date="1991" name="FEBS Lett.">
        <title>A new family of small (5 kDa) protein inhibitors of insect alpha-amylases from seeds or sorghum (Sorghum bicolar (L) Moench) have sequence homologies with wheat gamma-purothionins.</title>
        <authorList>
            <person name="Bloch C. Jr."/>
            <person name="Richardson M."/>
        </authorList>
    </citation>
    <scope>PROTEIN SEQUENCE</scope>
    <source>
        <strain>cv. French red</strain>
        <tissue>Seed</tissue>
    </source>
</reference>
<reference key="2">
    <citation type="journal article" date="1995" name="Eur. J. Biochem.">
        <title>Amino acid sequence and disulphide-bridge pattern of three gamma-thionins from Sorghum bicolor.</title>
        <authorList>
            <person name="Nitti G."/>
            <person name="Orru S."/>
            <person name="Bloch C. Jr."/>
            <person name="Morhy L."/>
            <person name="Marino G."/>
            <person name="Pucci P."/>
        </authorList>
    </citation>
    <scope>SEQUENCE REVISION TO 35</scope>
    <source>
        <tissue>Seed</tissue>
    </source>
</reference>
<reference key="3">
    <citation type="journal article" date="1998" name="Proteins">
        <title>1H NMR structure of an antifungal gamma-thionin protein SIalpha1: similarity to scorpion toxins.</title>
        <authorList>
            <person name="Bloch C. Jr."/>
            <person name="Patel S.U."/>
            <person name="Baud F."/>
            <person name="Zvelebil M.J."/>
            <person name="Carr M.D."/>
            <person name="Sadler P.J."/>
            <person name="Thornton J.M."/>
        </authorList>
    </citation>
    <scope>STRUCTURE BY NMR</scope>
</reference>
<protein>
    <recommendedName>
        <fullName>Defensin-like protein 1</fullName>
    </recommendedName>
    <alternativeName>
        <fullName>Small protein inhibitor of insect alpha-amylases 1</fullName>
        <shortName>SI alpha-1</shortName>
    </alternativeName>
</protein>
<accession>P21923</accession>
<sequence>RVCMGKSQHHSFPCISDRLCSNECVKEEGGWTAGYCHLRYCRCQKAC</sequence>
<keyword id="KW-0929">Antimicrobial</keyword>
<keyword id="KW-0903">Direct protein sequencing</keyword>
<keyword id="KW-1015">Disulfide bond</keyword>
<keyword id="KW-0295">Fungicide</keyword>
<keyword id="KW-0611">Plant defense</keyword>
<proteinExistence type="evidence at protein level"/>
<organism>
    <name type="scientific">Sorghum bicolor</name>
    <name type="common">Sorghum</name>
    <name type="synonym">Sorghum vulgare</name>
    <dbReference type="NCBI Taxonomy" id="4558"/>
    <lineage>
        <taxon>Eukaryota</taxon>
        <taxon>Viridiplantae</taxon>
        <taxon>Streptophyta</taxon>
        <taxon>Embryophyta</taxon>
        <taxon>Tracheophyta</taxon>
        <taxon>Spermatophyta</taxon>
        <taxon>Magnoliopsida</taxon>
        <taxon>Liliopsida</taxon>
        <taxon>Poales</taxon>
        <taxon>Poaceae</taxon>
        <taxon>PACMAD clade</taxon>
        <taxon>Panicoideae</taxon>
        <taxon>Andropogonodae</taxon>
        <taxon>Andropogoneae</taxon>
        <taxon>Sorghinae</taxon>
        <taxon>Sorghum</taxon>
    </lineage>
</organism>
<comment type="similarity">
    <text evidence="1">Belongs to the DEFL family. Protease inhibitor I18 (RTI/MTI-2) subfamily.</text>
</comment>
<comment type="caution">
    <text evidence="1">Was initially thought (PubMed:1995329, PubMed:7705336, PubMed:9715910) to be a protease inhibitor.</text>
</comment>